<comment type="catalytic activity">
    <reaction evidence="1">
        <text>butanoate + ATP = butanoyl phosphate + ADP</text>
        <dbReference type="Rhea" id="RHEA:13585"/>
        <dbReference type="ChEBI" id="CHEBI:17968"/>
        <dbReference type="ChEBI" id="CHEBI:30616"/>
        <dbReference type="ChEBI" id="CHEBI:58079"/>
        <dbReference type="ChEBI" id="CHEBI:456216"/>
        <dbReference type="EC" id="2.7.2.7"/>
    </reaction>
</comment>
<comment type="subcellular location">
    <subcellularLocation>
        <location evidence="1">Cytoplasm</location>
    </subcellularLocation>
</comment>
<comment type="similarity">
    <text evidence="1">Belongs to the acetokinase family.</text>
</comment>
<feature type="chain" id="PRO_1000128899" description="Probable butyrate kinase">
    <location>
        <begin position="1"/>
        <end position="367"/>
    </location>
</feature>
<organism>
    <name type="scientific">Bacillus cereus (strain B4264)</name>
    <dbReference type="NCBI Taxonomy" id="405532"/>
    <lineage>
        <taxon>Bacteria</taxon>
        <taxon>Bacillati</taxon>
        <taxon>Bacillota</taxon>
        <taxon>Bacilli</taxon>
        <taxon>Bacillales</taxon>
        <taxon>Bacillaceae</taxon>
        <taxon>Bacillus</taxon>
        <taxon>Bacillus cereus group</taxon>
    </lineage>
</organism>
<gene>
    <name evidence="1" type="primary">buk</name>
    <name type="ordered locus">BCB4264_A4274</name>
</gene>
<sequence>MSVNRILVINPGSTSTKIGVFDNERPVLEETIRHDVEQIGKYKRIIDQYEFRKETILEVLHSHGINISKLNAVCGRGGLLRPIEGGTYTVNDAMLEDLKNGFSGHHASNLGGILAYEIASGLNIPAFIVDPVVVDEMEPVARISGIAGMERKSIFHALNQKAVARKVAEQLNHKYEDLNLLVTHMGGGITVGAHKKGRVIDVNNGLNGEGPFSPERAGTVPVGQLVEMCFSGEYYRDEMIKKLVGQGGLVSLIDTNDAIKVEQMVEKGDPEATLIYKAMAYQVAKEIGGASAVLHGKIDAIVLTGGLAYSKILVDEIKERVDWIADVIVHPGEDELEALAEGALRVLREEEAPKEYVVREKETVARG</sequence>
<proteinExistence type="inferred from homology"/>
<keyword id="KW-0067">ATP-binding</keyword>
<keyword id="KW-0963">Cytoplasm</keyword>
<keyword id="KW-0418">Kinase</keyword>
<keyword id="KW-0547">Nucleotide-binding</keyword>
<keyword id="KW-0808">Transferase</keyword>
<protein>
    <recommendedName>
        <fullName evidence="1">Probable butyrate kinase</fullName>
        <shortName evidence="1">BK</shortName>
        <ecNumber evidence="1">2.7.2.7</ecNumber>
    </recommendedName>
    <alternativeName>
        <fullName evidence="1">Branched-chain carboxylic acid kinase</fullName>
    </alternativeName>
</protein>
<accession>B7HB35</accession>
<name>BUK_BACC4</name>
<dbReference type="EC" id="2.7.2.7" evidence="1"/>
<dbReference type="EMBL" id="CP001176">
    <property type="protein sequence ID" value="ACK61265.1"/>
    <property type="molecule type" value="Genomic_DNA"/>
</dbReference>
<dbReference type="RefSeq" id="WP_000115779.1">
    <property type="nucleotide sequence ID" value="NC_011725.1"/>
</dbReference>
<dbReference type="SMR" id="B7HB35"/>
<dbReference type="KEGG" id="bcb:BCB4264_A4274"/>
<dbReference type="HOGENOM" id="CLU_048716_0_0_9"/>
<dbReference type="Proteomes" id="UP000007096">
    <property type="component" value="Chromosome"/>
</dbReference>
<dbReference type="GO" id="GO:0005737">
    <property type="term" value="C:cytoplasm"/>
    <property type="evidence" value="ECO:0007669"/>
    <property type="project" value="UniProtKB-SubCell"/>
</dbReference>
<dbReference type="GO" id="GO:0008776">
    <property type="term" value="F:acetate kinase activity"/>
    <property type="evidence" value="ECO:0007669"/>
    <property type="project" value="TreeGrafter"/>
</dbReference>
<dbReference type="GO" id="GO:0005524">
    <property type="term" value="F:ATP binding"/>
    <property type="evidence" value="ECO:0007669"/>
    <property type="project" value="UniProtKB-KW"/>
</dbReference>
<dbReference type="GO" id="GO:0047761">
    <property type="term" value="F:butyrate kinase activity"/>
    <property type="evidence" value="ECO:0007669"/>
    <property type="project" value="UniProtKB-UniRule"/>
</dbReference>
<dbReference type="GO" id="GO:0006083">
    <property type="term" value="P:acetate metabolic process"/>
    <property type="evidence" value="ECO:0007669"/>
    <property type="project" value="TreeGrafter"/>
</dbReference>
<dbReference type="CDD" id="cd24011">
    <property type="entry name" value="ASKHA_NBD_BK"/>
    <property type="match status" value="1"/>
</dbReference>
<dbReference type="Gene3D" id="3.30.420.40">
    <property type="match status" value="2"/>
</dbReference>
<dbReference type="HAMAP" id="MF_00542">
    <property type="entry name" value="Butyrate_kinase"/>
    <property type="match status" value="1"/>
</dbReference>
<dbReference type="InterPro" id="IPR000890">
    <property type="entry name" value="Aliphatic_acid_kin_short-chain"/>
</dbReference>
<dbReference type="InterPro" id="IPR023865">
    <property type="entry name" value="Aliphatic_acid_kinase_CS"/>
</dbReference>
<dbReference type="InterPro" id="IPR043129">
    <property type="entry name" value="ATPase_NBD"/>
</dbReference>
<dbReference type="InterPro" id="IPR011245">
    <property type="entry name" value="Butyrate_kin"/>
</dbReference>
<dbReference type="NCBIfam" id="TIGR02707">
    <property type="entry name" value="butyr_kinase"/>
    <property type="match status" value="1"/>
</dbReference>
<dbReference type="NCBIfam" id="NF002834">
    <property type="entry name" value="PRK03011.1-5"/>
    <property type="match status" value="1"/>
</dbReference>
<dbReference type="PANTHER" id="PTHR21060">
    <property type="entry name" value="ACETATE KINASE"/>
    <property type="match status" value="1"/>
</dbReference>
<dbReference type="PANTHER" id="PTHR21060:SF3">
    <property type="entry name" value="BUTYRATE KINASE 2-RELATED"/>
    <property type="match status" value="1"/>
</dbReference>
<dbReference type="Pfam" id="PF00871">
    <property type="entry name" value="Acetate_kinase"/>
    <property type="match status" value="1"/>
</dbReference>
<dbReference type="PIRSF" id="PIRSF036458">
    <property type="entry name" value="Butyrate_kin"/>
    <property type="match status" value="1"/>
</dbReference>
<dbReference type="PRINTS" id="PR00471">
    <property type="entry name" value="ACETATEKNASE"/>
</dbReference>
<dbReference type="SUPFAM" id="SSF53067">
    <property type="entry name" value="Actin-like ATPase domain"/>
    <property type="match status" value="2"/>
</dbReference>
<dbReference type="PROSITE" id="PS01075">
    <property type="entry name" value="ACETATE_KINASE_1"/>
    <property type="match status" value="1"/>
</dbReference>
<dbReference type="PROSITE" id="PS01076">
    <property type="entry name" value="ACETATE_KINASE_2"/>
    <property type="match status" value="1"/>
</dbReference>
<reference key="1">
    <citation type="submission" date="2008-10" db="EMBL/GenBank/DDBJ databases">
        <title>Genome sequence of Bacillus cereus B4264.</title>
        <authorList>
            <person name="Dodson R.J."/>
            <person name="Durkin A.S."/>
            <person name="Rosovitz M.J."/>
            <person name="Rasko D.A."/>
            <person name="Hoffmaster A."/>
            <person name="Ravel J."/>
            <person name="Sutton G."/>
        </authorList>
    </citation>
    <scope>NUCLEOTIDE SEQUENCE [LARGE SCALE GENOMIC DNA]</scope>
    <source>
        <strain>B4264</strain>
    </source>
</reference>
<evidence type="ECO:0000255" key="1">
    <source>
        <dbReference type="HAMAP-Rule" id="MF_00542"/>
    </source>
</evidence>